<evidence type="ECO:0000250" key="1">
    <source>
        <dbReference type="UniProtKB" id="P08688"/>
    </source>
</evidence>
<evidence type="ECO:0000255" key="2"/>
<evidence type="ECO:0000269" key="3">
    <source>
    </source>
</evidence>
<evidence type="ECO:0000269" key="4">
    <source>
    </source>
</evidence>
<evidence type="ECO:0000303" key="5">
    <source>
    </source>
</evidence>
<evidence type="ECO:0000305" key="6"/>
<evidence type="ECO:0000312" key="7">
    <source>
        <dbReference type="PDB" id="3LP9"/>
    </source>
</evidence>
<evidence type="ECO:0007829" key="8">
    <source>
        <dbReference type="PDB" id="3LP9"/>
    </source>
</evidence>
<feature type="chain" id="PRO_0000408767" description="Albumin-2">
    <location>
        <begin position="1"/>
        <end position="227"/>
    </location>
</feature>
<feature type="repeat" description="Hemopexin 1">
    <location>
        <begin position="3"/>
        <end position="46"/>
    </location>
</feature>
<feature type="repeat" description="Hemopexin 2">
    <location>
        <begin position="61"/>
        <end position="111"/>
    </location>
</feature>
<feature type="repeat" description="Hemopexin 3">
    <location>
        <begin position="117"/>
        <end position="165"/>
    </location>
</feature>
<feature type="repeat" description="Hemopexin 4">
    <location>
        <begin position="171"/>
        <end position="221"/>
    </location>
</feature>
<feature type="binding site" evidence="4">
    <location>
        <position position="7"/>
    </location>
    <ligand>
        <name>Ca(2+)</name>
        <dbReference type="ChEBI" id="CHEBI:29108"/>
    </ligand>
</feature>
<feature type="binding site" evidence="4">
    <location>
        <position position="65"/>
    </location>
    <ligand>
        <name>Ca(2+)</name>
        <dbReference type="ChEBI" id="CHEBI:29108"/>
    </ligand>
</feature>
<feature type="binding site" evidence="2 5">
    <location>
        <position position="118"/>
    </location>
    <ligand>
        <name>spermine</name>
        <dbReference type="ChEBI" id="CHEBI:45725"/>
    </ligand>
</feature>
<feature type="binding site" evidence="4">
    <location>
        <position position="121"/>
    </location>
    <ligand>
        <name>Ca(2+)</name>
        <dbReference type="ChEBI" id="CHEBI:29108"/>
    </ligand>
</feature>
<feature type="binding site" evidence="4">
    <location>
        <position position="175"/>
    </location>
    <ligand>
        <name>Ca(2+)</name>
        <dbReference type="ChEBI" id="CHEBI:29108"/>
    </ligand>
</feature>
<feature type="strand" evidence="8">
    <location>
        <begin position="5"/>
        <end position="11"/>
    </location>
</feature>
<feature type="strand" evidence="8">
    <location>
        <begin position="17"/>
        <end position="22"/>
    </location>
</feature>
<feature type="strand" evidence="8">
    <location>
        <begin position="25"/>
        <end position="30"/>
    </location>
</feature>
<feature type="strand" evidence="8">
    <location>
        <begin position="39"/>
        <end position="46"/>
    </location>
</feature>
<feature type="helix" evidence="8">
    <location>
        <begin position="47"/>
        <end position="50"/>
    </location>
</feature>
<feature type="helix" evidence="8">
    <location>
        <begin position="52"/>
        <end position="54"/>
    </location>
</feature>
<feature type="helix" evidence="8">
    <location>
        <begin position="58"/>
        <end position="62"/>
    </location>
</feature>
<feature type="strand" evidence="8">
    <location>
        <begin position="65"/>
        <end position="69"/>
    </location>
</feature>
<feature type="strand" evidence="8">
    <location>
        <begin position="74"/>
        <end position="79"/>
    </location>
</feature>
<feature type="strand" evidence="8">
    <location>
        <begin position="82"/>
        <end position="87"/>
    </location>
</feature>
<feature type="turn" evidence="8">
    <location>
        <begin position="90"/>
        <end position="92"/>
    </location>
</feature>
<feature type="strand" evidence="8">
    <location>
        <begin position="96"/>
        <end position="103"/>
    </location>
</feature>
<feature type="helix" evidence="8">
    <location>
        <begin position="104"/>
        <end position="107"/>
    </location>
</feature>
<feature type="helix" evidence="8">
    <location>
        <begin position="109"/>
        <end position="111"/>
    </location>
</feature>
<feature type="turn" evidence="8">
    <location>
        <begin position="115"/>
        <end position="118"/>
    </location>
</feature>
<feature type="strand" evidence="8">
    <location>
        <begin position="121"/>
        <end position="125"/>
    </location>
</feature>
<feature type="strand" evidence="8">
    <location>
        <begin position="131"/>
        <end position="136"/>
    </location>
</feature>
<feature type="strand" evidence="8">
    <location>
        <begin position="139"/>
        <end position="144"/>
    </location>
</feature>
<feature type="turn" evidence="8">
    <location>
        <begin position="145"/>
        <end position="148"/>
    </location>
</feature>
<feature type="strand" evidence="8">
    <location>
        <begin position="149"/>
        <end position="154"/>
    </location>
</feature>
<feature type="helix" evidence="8">
    <location>
        <begin position="158"/>
        <end position="161"/>
    </location>
</feature>
<feature type="helix" evidence="8">
    <location>
        <begin position="163"/>
        <end position="165"/>
    </location>
</feature>
<feature type="helix" evidence="8">
    <location>
        <begin position="169"/>
        <end position="172"/>
    </location>
</feature>
<feature type="strand" evidence="8">
    <location>
        <begin position="175"/>
        <end position="179"/>
    </location>
</feature>
<feature type="strand" evidence="8">
    <location>
        <begin position="185"/>
        <end position="190"/>
    </location>
</feature>
<feature type="strand" evidence="8">
    <location>
        <begin position="193"/>
        <end position="198"/>
    </location>
</feature>
<feature type="strand" evidence="8">
    <location>
        <begin position="201"/>
        <end position="203"/>
    </location>
</feature>
<feature type="strand" evidence="8">
    <location>
        <begin position="206"/>
        <end position="209"/>
    </location>
</feature>
<feature type="helix" evidence="8">
    <location>
        <begin position="214"/>
        <end position="217"/>
    </location>
</feature>
<feature type="helix" evidence="8">
    <location>
        <begin position="219"/>
        <end position="221"/>
    </location>
</feature>
<feature type="turn" evidence="8">
    <location>
        <begin position="222"/>
        <end position="224"/>
    </location>
</feature>
<accession>D4AEP7</accession>
<accession>P86190</accession>
<organism>
    <name type="scientific">Lathyrus sativus</name>
    <name type="common">White vetchling</name>
    <dbReference type="NCBI Taxonomy" id="3860"/>
    <lineage>
        <taxon>Eukaryota</taxon>
        <taxon>Viridiplantae</taxon>
        <taxon>Streptophyta</taxon>
        <taxon>Embryophyta</taxon>
        <taxon>Tracheophyta</taxon>
        <taxon>Spermatophyta</taxon>
        <taxon>Magnoliopsida</taxon>
        <taxon>eudicotyledons</taxon>
        <taxon>Gunneridae</taxon>
        <taxon>Pentapetalae</taxon>
        <taxon>rosids</taxon>
        <taxon>fabids</taxon>
        <taxon>Fabales</taxon>
        <taxon>Fabaceae</taxon>
        <taxon>Papilionoideae</taxon>
        <taxon>50 kb inversion clade</taxon>
        <taxon>NPAAA clade</taxon>
        <taxon>Hologalegina</taxon>
        <taxon>IRL clade</taxon>
        <taxon>Fabeae</taxon>
        <taxon>Lathyrus</taxon>
    </lineage>
</organism>
<name>ALB2_LATSA</name>
<keyword id="KW-0002">3D-structure</keyword>
<keyword id="KW-0106">Calcium</keyword>
<keyword id="KW-0963">Cytoplasm</keyword>
<keyword id="KW-0903">Direct protein sequencing</keyword>
<keyword id="KW-0479">Metal-binding</keyword>
<keyword id="KW-0677">Repeat</keyword>
<keyword id="KW-0708">Seed storage protein</keyword>
<keyword id="KW-0758">Storage protein</keyword>
<dbReference type="PDB" id="3LP9">
    <property type="method" value="X-ray"/>
    <property type="resolution" value="2.20 A"/>
    <property type="chains" value="A/B/C/D=1-227"/>
</dbReference>
<dbReference type="PDBsum" id="3LP9"/>
<dbReference type="SMR" id="D4AEP7"/>
<dbReference type="EvolutionaryTrace" id="D4AEP7"/>
<dbReference type="GO" id="GO:0005829">
    <property type="term" value="C:cytosol"/>
    <property type="evidence" value="ECO:0007669"/>
    <property type="project" value="UniProtKB-SubCell"/>
</dbReference>
<dbReference type="GO" id="GO:0005509">
    <property type="term" value="F:calcium ion binding"/>
    <property type="evidence" value="ECO:0000314"/>
    <property type="project" value="UniProtKB"/>
</dbReference>
<dbReference type="GO" id="GO:0020037">
    <property type="term" value="F:heme binding"/>
    <property type="evidence" value="ECO:0000314"/>
    <property type="project" value="UniProtKB"/>
</dbReference>
<dbReference type="GO" id="GO:0045735">
    <property type="term" value="F:nutrient reservoir activity"/>
    <property type="evidence" value="ECO:0007669"/>
    <property type="project" value="UniProtKB-KW"/>
</dbReference>
<dbReference type="CDD" id="cd00094">
    <property type="entry name" value="HX"/>
    <property type="match status" value="1"/>
</dbReference>
<dbReference type="Gene3D" id="2.110.10.10">
    <property type="entry name" value="Hemopexin-like domain"/>
    <property type="match status" value="1"/>
</dbReference>
<dbReference type="InterPro" id="IPR000585">
    <property type="entry name" value="Hemopexin-like_dom"/>
</dbReference>
<dbReference type="InterPro" id="IPR036375">
    <property type="entry name" value="Hemopexin-like_dom_sf"/>
</dbReference>
<dbReference type="InterPro" id="IPR018487">
    <property type="entry name" value="Hemopexin-like_repeat"/>
</dbReference>
<dbReference type="Pfam" id="PF00045">
    <property type="entry name" value="Hemopexin"/>
    <property type="match status" value="3"/>
</dbReference>
<dbReference type="SMART" id="SM00120">
    <property type="entry name" value="HX"/>
    <property type="match status" value="3"/>
</dbReference>
<dbReference type="SUPFAM" id="SSF50923">
    <property type="entry name" value="Hemopexin-like domain"/>
    <property type="match status" value="1"/>
</dbReference>
<dbReference type="PROSITE" id="PS51642">
    <property type="entry name" value="HEMOPEXIN_2"/>
    <property type="match status" value="4"/>
</dbReference>
<comment type="function">
    <text evidence="4">May play a role in response to oxidative stress and polyamine biosynthesis. The monomeric form binds one hemin per monomer. In the dimeric form, about half of the dimers bind one molecule of spermine each under physiological conditions. Ligand binding is mutually exclusive as binding of hemin leads to dissociation of the dimer.</text>
</comment>
<comment type="subunit">
    <text evidence="4">Monomer and homodimer. Dimers are prevalent in solution.</text>
</comment>
<comment type="subcellular location">
    <subcellularLocation>
        <location evidence="1">Cytoplasm</location>
        <location evidence="1">Cytosol</location>
    </subcellularLocation>
</comment>
<proteinExistence type="evidence at protein level"/>
<reference evidence="6 7" key="1">
    <citation type="journal article" date="2010" name="Plant Physiol.">
        <title>Crystal structure and functional insights of hemopexin fold protein from grass pea.</title>
        <authorList>
            <person name="Gaur V."/>
            <person name="Qureshi I.A."/>
            <person name="Singh A."/>
            <person name="Chanana V."/>
            <person name="Salunke D.M."/>
        </authorList>
    </citation>
    <scope>PROTEIN SEQUENCE</scope>
    <scope>FUNCTION</scope>
    <scope>SUBUNIT</scope>
    <scope>HEME-BINDING</scope>
    <scope>X-RAY CRYSTALLOGRAPHY (2.20 ANGSTROMS) IN COMPLEX WITH CALCIUM</scope>
    <source>
        <tissue evidence="4">Seed</tissue>
    </source>
</reference>
<reference evidence="6" key="2">
    <citation type="journal article" date="2006" name="Acta Crystallogr. F">
        <title>Purification, identification and preliminary crystallographic studies of an allergenic protein from Lathyrus sativus.</title>
        <authorList>
            <person name="Qureshi I.A."/>
            <person name="Sethi D.K."/>
            <person name="Salunke D.M."/>
        </authorList>
    </citation>
    <scope>PROTEIN SEQUENCE OF 1-40</scope>
    <scope>CRYSTALLIZATION</scope>
    <scope>PRELIMINARY X-RAY CRYSTALLOGRAPHY (3.0 ANGSTROMS)</scope>
    <source>
        <tissue evidence="3">Seed</tissue>
    </source>
</reference>
<sequence>TKPGYINAAFRSSKNNEAYFFINDKYVLLDYAPGSSRDKVLYGPTPVRDGFKSLNQTIFGSYGIDCSFDTENNEAFIFYENFCALIDYAPHSKKDKIILGPKKIADVFPFFEGTVFESGIDAAYRSTRGKEVYLFKGDQYARIDYGSNSMVNKEIKSISSGYPCFRNTIFESGADAAFASHKTNEVYFFKDDHYARVKVTPGGKLAIMDGVREIVDYWPSLKDIVPL</sequence>
<protein>
    <recommendedName>
        <fullName evidence="1">Albumin-2</fullName>
    </recommendedName>
    <alternativeName>
        <fullName evidence="5">24 kDa albumin</fullName>
        <shortName evidence="5">LS-24</shortName>
    </alternativeName>
    <alternativeName>
        <fullName evidence="1">PA2</fullName>
    </alternativeName>
</protein>